<organism>
    <name type="scientific">Danio rerio</name>
    <name type="common">Zebrafish</name>
    <name type="synonym">Brachydanio rerio</name>
    <dbReference type="NCBI Taxonomy" id="7955"/>
    <lineage>
        <taxon>Eukaryota</taxon>
        <taxon>Metazoa</taxon>
        <taxon>Chordata</taxon>
        <taxon>Craniata</taxon>
        <taxon>Vertebrata</taxon>
        <taxon>Euteleostomi</taxon>
        <taxon>Actinopterygii</taxon>
        <taxon>Neopterygii</taxon>
        <taxon>Teleostei</taxon>
        <taxon>Ostariophysi</taxon>
        <taxon>Cypriniformes</taxon>
        <taxon>Danionidae</taxon>
        <taxon>Danioninae</taxon>
        <taxon>Danio</taxon>
    </lineage>
</organism>
<gene>
    <name type="primary">rps21</name>
</gene>
<proteinExistence type="evidence at protein level"/>
<keyword id="KW-0002">3D-structure</keyword>
<keyword id="KW-0963">Cytoplasm</keyword>
<keyword id="KW-0256">Endoplasmic reticulum</keyword>
<keyword id="KW-1185">Reference proteome</keyword>
<keyword id="KW-0687">Ribonucleoprotein</keyword>
<keyword id="KW-0689">Ribosomal protein</keyword>
<feature type="chain" id="PRO_0000194734" description="Small ribosomal subunit protein eS21">
    <location>
        <begin position="1"/>
        <end position="81"/>
    </location>
</feature>
<evidence type="ECO:0000250" key="1">
    <source>
        <dbReference type="UniProtKB" id="P63220"/>
    </source>
</evidence>
<evidence type="ECO:0000250" key="2">
    <source>
        <dbReference type="UniProtKB" id="P63221"/>
    </source>
</evidence>
<evidence type="ECO:0000305" key="3"/>
<dbReference type="EMBL" id="BC049056">
    <property type="protein sequence ID" value="AAH49056.1"/>
    <property type="molecule type" value="mRNA"/>
</dbReference>
<dbReference type="EMBL" id="BC071475">
    <property type="protein sequence ID" value="AAH71475.1"/>
    <property type="molecule type" value="mRNA"/>
</dbReference>
<dbReference type="RefSeq" id="NP_957485.1">
    <property type="nucleotide sequence ID" value="NM_201191.1"/>
</dbReference>
<dbReference type="PDB" id="7OYA">
    <property type="method" value="EM"/>
    <property type="resolution" value="3.20 A"/>
    <property type="chains" value="V2=1-81"/>
</dbReference>
<dbReference type="PDB" id="7OYB">
    <property type="method" value="EM"/>
    <property type="resolution" value="2.40 A"/>
    <property type="chains" value="V2=1-81"/>
</dbReference>
<dbReference type="PDBsum" id="7OYA"/>
<dbReference type="PDBsum" id="7OYB"/>
<dbReference type="EMDB" id="EMD-13111"/>
<dbReference type="EMDB" id="EMD-13112"/>
<dbReference type="SMR" id="Q7ZUG5"/>
<dbReference type="FunCoup" id="Q7ZUG5">
    <property type="interactions" value="2511"/>
</dbReference>
<dbReference type="STRING" id="7955.ENSDARP00000031181"/>
<dbReference type="PaxDb" id="7955-ENSDARP00000122013"/>
<dbReference type="Ensembl" id="ENSDART00000033663">
    <property type="protein sequence ID" value="ENSDARP00000031181"/>
    <property type="gene ID" value="ENSDARG00000025850"/>
</dbReference>
<dbReference type="Ensembl" id="ENSDART00000139870">
    <property type="protein sequence ID" value="ENSDARP00000122013"/>
    <property type="gene ID" value="ENSDARG00000025850"/>
</dbReference>
<dbReference type="GeneID" id="394166"/>
<dbReference type="KEGG" id="dre:394166"/>
<dbReference type="AGR" id="ZFIN:ZDB-GENE-040426-1102"/>
<dbReference type="CTD" id="6227"/>
<dbReference type="ZFIN" id="ZDB-GENE-040426-1102">
    <property type="gene designation" value="rps21"/>
</dbReference>
<dbReference type="eggNOG" id="KOG3486">
    <property type="taxonomic scope" value="Eukaryota"/>
</dbReference>
<dbReference type="HOGENOM" id="CLU_167122_2_0_1"/>
<dbReference type="InParanoid" id="Q7ZUG5"/>
<dbReference type="OMA" id="GESDACM"/>
<dbReference type="OrthoDB" id="278325at2759"/>
<dbReference type="PhylomeDB" id="Q7ZUG5"/>
<dbReference type="TreeFam" id="TF300167"/>
<dbReference type="Reactome" id="R-DRE-156827">
    <property type="pathway name" value="L13a-mediated translational silencing of Ceruloplasmin expression"/>
</dbReference>
<dbReference type="Reactome" id="R-DRE-1799339">
    <property type="pathway name" value="SRP-dependent cotranslational protein targeting to membrane"/>
</dbReference>
<dbReference type="Reactome" id="R-DRE-72689">
    <property type="pathway name" value="Formation of a pool of free 40S subunits"/>
</dbReference>
<dbReference type="Reactome" id="R-DRE-72695">
    <property type="pathway name" value="Formation of the ternary complex, and subsequently, the 43S complex"/>
</dbReference>
<dbReference type="Reactome" id="R-DRE-72702">
    <property type="pathway name" value="Ribosomal scanning and start codon recognition"/>
</dbReference>
<dbReference type="Reactome" id="R-DRE-975956">
    <property type="pathway name" value="Nonsense Mediated Decay (NMD) independent of the Exon Junction Complex (EJC)"/>
</dbReference>
<dbReference type="Reactome" id="R-DRE-975957">
    <property type="pathway name" value="Nonsense Mediated Decay (NMD) enhanced by the Exon Junction Complex (EJC)"/>
</dbReference>
<dbReference type="PRO" id="PR:Q7ZUG5"/>
<dbReference type="Proteomes" id="UP000000437">
    <property type="component" value="Chromosome 23"/>
</dbReference>
<dbReference type="Bgee" id="ENSDARG00000025850">
    <property type="expression patterns" value="Expressed in tail bud paraxial mesoderm and 28 other cell types or tissues"/>
</dbReference>
<dbReference type="GO" id="GO:0022627">
    <property type="term" value="C:cytosolic small ribosomal subunit"/>
    <property type="evidence" value="ECO:0000250"/>
    <property type="project" value="UniProtKB"/>
</dbReference>
<dbReference type="GO" id="GO:0005791">
    <property type="term" value="C:rough endoplasmic reticulum"/>
    <property type="evidence" value="ECO:0007669"/>
    <property type="project" value="UniProtKB-SubCell"/>
</dbReference>
<dbReference type="GO" id="GO:0003735">
    <property type="term" value="F:structural constituent of ribosome"/>
    <property type="evidence" value="ECO:0000318"/>
    <property type="project" value="GO_Central"/>
</dbReference>
<dbReference type="GO" id="GO:0002181">
    <property type="term" value="P:cytoplasmic translation"/>
    <property type="evidence" value="ECO:0000250"/>
    <property type="project" value="UniProtKB"/>
</dbReference>
<dbReference type="GO" id="GO:0000447">
    <property type="term" value="P:endonucleolytic cleavage in ITS1 to separate SSU-rRNA from 5.8S rRNA and LSU-rRNA from tricistronic rRNA transcript (SSU-rRNA, 5.8S rRNA, LSU-rRNA)"/>
    <property type="evidence" value="ECO:0000318"/>
    <property type="project" value="GO_Central"/>
</dbReference>
<dbReference type="GO" id="GO:0000461">
    <property type="term" value="P:endonucleolytic cleavage to generate mature 3'-end of SSU-rRNA from (SSU-rRNA, 5.8S rRNA, LSU-rRNA)"/>
    <property type="evidence" value="ECO:0000318"/>
    <property type="project" value="GO_Central"/>
</dbReference>
<dbReference type="FunFam" id="3.30.1230.20:FF:000001">
    <property type="entry name" value="40S ribosomal protein S21"/>
    <property type="match status" value="1"/>
</dbReference>
<dbReference type="Gene3D" id="3.30.1230.20">
    <property type="match status" value="1"/>
</dbReference>
<dbReference type="InterPro" id="IPR001931">
    <property type="entry name" value="Ribosomal_eS21"/>
</dbReference>
<dbReference type="InterPro" id="IPR018279">
    <property type="entry name" value="Ribosomal_eS21_CS"/>
</dbReference>
<dbReference type="InterPro" id="IPR038579">
    <property type="entry name" value="Ribosomal_eS21_sf"/>
</dbReference>
<dbReference type="PANTHER" id="PTHR10442">
    <property type="entry name" value="40S RIBOSOMAL PROTEIN S21"/>
    <property type="match status" value="1"/>
</dbReference>
<dbReference type="Pfam" id="PF01249">
    <property type="entry name" value="Ribosomal_S21e"/>
    <property type="match status" value="1"/>
</dbReference>
<dbReference type="PIRSF" id="PIRSF002148">
    <property type="entry name" value="Ribosomal_S21e"/>
    <property type="match status" value="1"/>
</dbReference>
<dbReference type="PROSITE" id="PS00996">
    <property type="entry name" value="RIBOSOMAL_S21E"/>
    <property type="match status" value="1"/>
</dbReference>
<name>RS21_DANRE</name>
<comment type="function">
    <text evidence="1">Component of the small ribosomal subunit. The ribosome is a large ribonucleoprotein complex responsible for the synthesis of proteins in the cell.</text>
</comment>
<comment type="subunit">
    <text evidence="1">Component of the 40S small ribosomal subunit.</text>
</comment>
<comment type="subcellular location">
    <subcellularLocation>
        <location evidence="1">Cytoplasm</location>
        <location evidence="1">Cytosol</location>
    </subcellularLocation>
    <subcellularLocation>
        <location evidence="1">Cytoplasm</location>
    </subcellularLocation>
    <subcellularLocation>
        <location evidence="2">Rough endoplasmic reticulum</location>
    </subcellularLocation>
    <text evidence="1 2">Detected on cytosolic polysomes (By similarity). Detected in ribosomes that are associated with the rough endoplasmic reticulum (By similarity).</text>
</comment>
<comment type="similarity">
    <text evidence="3">Belongs to the eukaryotic ribosomal protein eS21 family.</text>
</comment>
<sequence>MQNDAGEFVDLYVPRKCSASNRIIGAKDHASIQINIAEVDRVTGRFNGQFKTYAICGAIRRMGEADDSLLRLAKTDSIVAK</sequence>
<reference key="1">
    <citation type="submission" date="2004-06" db="EMBL/GenBank/DDBJ databases">
        <authorList>
            <consortium name="NIH - Zebrafish Gene Collection (ZGC) project"/>
        </authorList>
    </citation>
    <scope>NUCLEOTIDE SEQUENCE [LARGE SCALE MRNA]</scope>
    <source>
        <tissue>Embryo</tissue>
    </source>
</reference>
<protein>
    <recommendedName>
        <fullName evidence="3">Small ribosomal subunit protein eS21</fullName>
    </recommendedName>
    <alternativeName>
        <fullName>40S ribosomal protein S21</fullName>
    </alternativeName>
</protein>
<accession>Q7ZUG5</accession>